<gene>
    <name evidence="1" type="primary">atpB</name>
    <name type="ordered locus">VV1_1015</name>
</gene>
<protein>
    <recommendedName>
        <fullName evidence="1">ATP synthase subunit a</fullName>
    </recommendedName>
    <alternativeName>
        <fullName evidence="1">ATP synthase F0 sector subunit a</fullName>
    </alternativeName>
    <alternativeName>
        <fullName evidence="1">F-ATPase subunit 6</fullName>
    </alternativeName>
</protein>
<feature type="chain" id="PRO_0000362504" description="ATP synthase subunit a">
    <location>
        <begin position="1"/>
        <end position="270"/>
    </location>
</feature>
<feature type="transmembrane region" description="Helical" evidence="1">
    <location>
        <begin position="40"/>
        <end position="60"/>
    </location>
</feature>
<feature type="transmembrane region" description="Helical" evidence="1">
    <location>
        <begin position="98"/>
        <end position="118"/>
    </location>
</feature>
<feature type="transmembrane region" description="Helical" evidence="1">
    <location>
        <begin position="143"/>
        <end position="163"/>
    </location>
</feature>
<feature type="transmembrane region" description="Helical" evidence="1">
    <location>
        <begin position="208"/>
        <end position="228"/>
    </location>
</feature>
<feature type="transmembrane region" description="Helical" evidence="1">
    <location>
        <begin position="239"/>
        <end position="259"/>
    </location>
</feature>
<sequence>MAAPGEALTPSGYITHHLTNLSTYKLGLVAEESSFWNVHIDSLFFSWFTGLIFLGIFYAVARKTTAGVPGKLQCAVEMIVEFVATNVKDTFHGRNPLIAPLALTIFCWVFLMNLMDLVPIDFLPYPAEHWLGIPYLKVVPSADVNITMAMALGVFALMIYYSIKVKGLGGFARELALHPFNHWTMIPFNLLIEVVSLLAKPLSLGMRLFGNMFAGEVVFILCAAMLPWYLQWMGSLPWAIFHILVILIQAFVFMMLTIVYMSMAHEDSDH</sequence>
<keyword id="KW-0066">ATP synthesis</keyword>
<keyword id="KW-0997">Cell inner membrane</keyword>
<keyword id="KW-1003">Cell membrane</keyword>
<keyword id="KW-0138">CF(0)</keyword>
<keyword id="KW-0375">Hydrogen ion transport</keyword>
<keyword id="KW-0406">Ion transport</keyword>
<keyword id="KW-0472">Membrane</keyword>
<keyword id="KW-0812">Transmembrane</keyword>
<keyword id="KW-1133">Transmembrane helix</keyword>
<keyword id="KW-0813">Transport</keyword>
<name>ATP6_VIBVU</name>
<proteinExistence type="inferred from homology"/>
<organism>
    <name type="scientific">Vibrio vulnificus (strain CMCP6)</name>
    <dbReference type="NCBI Taxonomy" id="216895"/>
    <lineage>
        <taxon>Bacteria</taxon>
        <taxon>Pseudomonadati</taxon>
        <taxon>Pseudomonadota</taxon>
        <taxon>Gammaproteobacteria</taxon>
        <taxon>Vibrionales</taxon>
        <taxon>Vibrionaceae</taxon>
        <taxon>Vibrio</taxon>
    </lineage>
</organism>
<reference key="1">
    <citation type="submission" date="2002-12" db="EMBL/GenBank/DDBJ databases">
        <title>Complete genome sequence of Vibrio vulnificus CMCP6.</title>
        <authorList>
            <person name="Rhee J.H."/>
            <person name="Kim S.Y."/>
            <person name="Chung S.S."/>
            <person name="Kim J.J."/>
            <person name="Moon Y.H."/>
            <person name="Jeong H."/>
            <person name="Choy H.E."/>
        </authorList>
    </citation>
    <scope>NUCLEOTIDE SEQUENCE [LARGE SCALE GENOMIC DNA]</scope>
    <source>
        <strain>CMCP6</strain>
    </source>
</reference>
<evidence type="ECO:0000255" key="1">
    <source>
        <dbReference type="HAMAP-Rule" id="MF_01393"/>
    </source>
</evidence>
<comment type="function">
    <text evidence="1">Key component of the proton channel; it plays a direct role in the translocation of protons across the membrane.</text>
</comment>
<comment type="subunit">
    <text evidence="1">F-type ATPases have 2 components, CF(1) - the catalytic core - and CF(0) - the membrane proton channel. CF(1) has five subunits: alpha(3), beta(3), gamma(1), delta(1), epsilon(1). CF(0) has three main subunits: a(1), b(2) and c(9-12). The alpha and beta chains form an alternating ring which encloses part of the gamma chain. CF(1) is attached to CF(0) by a central stalk formed by the gamma and epsilon chains, while a peripheral stalk is formed by the delta and b chains.</text>
</comment>
<comment type="subcellular location">
    <subcellularLocation>
        <location evidence="1">Cell inner membrane</location>
        <topology evidence="1">Multi-pass membrane protein</topology>
    </subcellularLocation>
</comment>
<comment type="similarity">
    <text evidence="1">Belongs to the ATPase A chain family.</text>
</comment>
<accession>Q8DDH4</accession>
<dbReference type="EMBL" id="AE016795">
    <property type="protein sequence ID" value="AAO09503.1"/>
    <property type="molecule type" value="Genomic_DNA"/>
</dbReference>
<dbReference type="RefSeq" id="WP_011079049.1">
    <property type="nucleotide sequence ID" value="NC_004459.3"/>
</dbReference>
<dbReference type="SMR" id="Q8DDH4"/>
<dbReference type="GeneID" id="93895304"/>
<dbReference type="KEGG" id="vvu:VV1_1015"/>
<dbReference type="HOGENOM" id="CLU_041018_1_0_6"/>
<dbReference type="Proteomes" id="UP000002275">
    <property type="component" value="Chromosome 1"/>
</dbReference>
<dbReference type="GO" id="GO:0005886">
    <property type="term" value="C:plasma membrane"/>
    <property type="evidence" value="ECO:0007669"/>
    <property type="project" value="UniProtKB-SubCell"/>
</dbReference>
<dbReference type="GO" id="GO:0045259">
    <property type="term" value="C:proton-transporting ATP synthase complex"/>
    <property type="evidence" value="ECO:0007669"/>
    <property type="project" value="UniProtKB-KW"/>
</dbReference>
<dbReference type="GO" id="GO:0046933">
    <property type="term" value="F:proton-transporting ATP synthase activity, rotational mechanism"/>
    <property type="evidence" value="ECO:0007669"/>
    <property type="project" value="UniProtKB-UniRule"/>
</dbReference>
<dbReference type="GO" id="GO:0042777">
    <property type="term" value="P:proton motive force-driven plasma membrane ATP synthesis"/>
    <property type="evidence" value="ECO:0007669"/>
    <property type="project" value="TreeGrafter"/>
</dbReference>
<dbReference type="CDD" id="cd00310">
    <property type="entry name" value="ATP-synt_Fo_a_6"/>
    <property type="match status" value="1"/>
</dbReference>
<dbReference type="FunFam" id="1.20.120.220:FF:000002">
    <property type="entry name" value="ATP synthase subunit a"/>
    <property type="match status" value="1"/>
</dbReference>
<dbReference type="Gene3D" id="1.20.120.220">
    <property type="entry name" value="ATP synthase, F0 complex, subunit A"/>
    <property type="match status" value="1"/>
</dbReference>
<dbReference type="HAMAP" id="MF_01393">
    <property type="entry name" value="ATP_synth_a_bact"/>
    <property type="match status" value="1"/>
</dbReference>
<dbReference type="InterPro" id="IPR045082">
    <property type="entry name" value="ATP_syn_F0_a_bact/chloroplast"/>
</dbReference>
<dbReference type="InterPro" id="IPR000568">
    <property type="entry name" value="ATP_synth_F0_asu"/>
</dbReference>
<dbReference type="InterPro" id="IPR023011">
    <property type="entry name" value="ATP_synth_F0_asu_AS"/>
</dbReference>
<dbReference type="InterPro" id="IPR035908">
    <property type="entry name" value="F0_ATP_A_sf"/>
</dbReference>
<dbReference type="NCBIfam" id="TIGR01131">
    <property type="entry name" value="ATP_synt_6_or_A"/>
    <property type="match status" value="1"/>
</dbReference>
<dbReference type="NCBIfam" id="NF004477">
    <property type="entry name" value="PRK05815.1-1"/>
    <property type="match status" value="1"/>
</dbReference>
<dbReference type="PANTHER" id="PTHR42823">
    <property type="entry name" value="ATP SYNTHASE SUBUNIT A, CHLOROPLASTIC"/>
    <property type="match status" value="1"/>
</dbReference>
<dbReference type="PANTHER" id="PTHR42823:SF3">
    <property type="entry name" value="ATP SYNTHASE SUBUNIT A, CHLOROPLASTIC"/>
    <property type="match status" value="1"/>
</dbReference>
<dbReference type="Pfam" id="PF00119">
    <property type="entry name" value="ATP-synt_A"/>
    <property type="match status" value="1"/>
</dbReference>
<dbReference type="PRINTS" id="PR00123">
    <property type="entry name" value="ATPASEA"/>
</dbReference>
<dbReference type="SUPFAM" id="SSF81336">
    <property type="entry name" value="F1F0 ATP synthase subunit A"/>
    <property type="match status" value="1"/>
</dbReference>
<dbReference type="PROSITE" id="PS00449">
    <property type="entry name" value="ATPASE_A"/>
    <property type="match status" value="1"/>
</dbReference>